<feature type="signal peptide" evidence="2">
    <location>
        <begin position="1"/>
        <end position="26"/>
    </location>
</feature>
<feature type="chain" id="PRO_5028810028" description="Non-specific lipid-transfer protein" evidence="2">
    <location>
        <begin position="27"/>
        <end position="124"/>
    </location>
</feature>
<feature type="disulfide bond" evidence="1">
    <location>
        <begin position="30"/>
        <end position="77"/>
    </location>
</feature>
<feature type="disulfide bond" evidence="1">
    <location>
        <begin position="40"/>
        <end position="54"/>
    </location>
</feature>
<feature type="disulfide bond" evidence="1">
    <location>
        <begin position="55"/>
        <end position="100"/>
    </location>
</feature>
<feature type="disulfide bond" evidence="1">
    <location>
        <begin position="75"/>
        <end position="114"/>
    </location>
</feature>
<reference evidence="8" key="1">
    <citation type="submission" date="2020-07" db="EMBL/GenBank/DDBJ databases">
        <authorList>
            <person name="Kabasser S."/>
        </authorList>
    </citation>
    <scope>NUCLEOTIDE SEQUENCE [GENOMIC DNA]</scope>
    <source>
        <tissue evidence="8">Seed</tissue>
    </source>
</reference>
<reference evidence="6" key="2">
    <citation type="journal article" date="2022" name="Food Chem.">
        <title>Identification of vicilin, legumin and antimicrobial peptide 2a as macadamia nut allergens.</title>
        <authorList>
            <person name="Kabasser S."/>
            <person name="Pratap K."/>
            <person name="Kamath S."/>
            <person name="Taki A.C."/>
            <person name="Dang T."/>
            <person name="Koplin J."/>
            <person name="Perrett K."/>
            <person name="Hummel K."/>
            <person name="Radauer C."/>
            <person name="Breiteneder H."/>
            <person name="Lopata A.L."/>
            <person name="Bublin M."/>
        </authorList>
    </citation>
    <scope>SYNTHESIS</scope>
    <scope>ALLERGEN</scope>
</reference>
<keyword id="KW-0020">Allergen</keyword>
<keyword id="KW-1015">Disulfide bond</keyword>
<keyword id="KW-0389">IgE-binding protein</keyword>
<keyword id="KW-0446">Lipid-binding</keyword>
<keyword id="KW-0732">Signal</keyword>
<keyword id="KW-0813">Transport</keyword>
<gene>
    <name evidence="8" type="primary">Mac_nsLTP</name>
</gene>
<dbReference type="EMBL" id="LR861101">
    <property type="protein sequence ID" value="CAD1459612.1"/>
    <property type="molecule type" value="Genomic_DNA"/>
</dbReference>
<dbReference type="SMR" id="A0A7G2A2Z3"/>
<dbReference type="GO" id="GO:0019863">
    <property type="term" value="F:IgE binding"/>
    <property type="evidence" value="ECO:0000314"/>
    <property type="project" value="UniProtKB"/>
</dbReference>
<dbReference type="GO" id="GO:0008289">
    <property type="term" value="F:lipid binding"/>
    <property type="evidence" value="ECO:0007669"/>
    <property type="project" value="UniProtKB-KW"/>
</dbReference>
<dbReference type="GO" id="GO:0006869">
    <property type="term" value="P:lipid transport"/>
    <property type="evidence" value="ECO:0007669"/>
    <property type="project" value="InterPro"/>
</dbReference>
<dbReference type="CDD" id="cd01960">
    <property type="entry name" value="nsLTP1"/>
    <property type="match status" value="1"/>
</dbReference>
<dbReference type="FunFam" id="1.10.110.10:FF:000002">
    <property type="entry name" value="Non-specific lipid-transfer protein"/>
    <property type="match status" value="1"/>
</dbReference>
<dbReference type="Gene3D" id="1.10.110.10">
    <property type="entry name" value="Plant lipid-transfer and hydrophobic proteins"/>
    <property type="match status" value="1"/>
</dbReference>
<dbReference type="InterPro" id="IPR036312">
    <property type="entry name" value="Bifun_inhib/LTP/seed_sf"/>
</dbReference>
<dbReference type="InterPro" id="IPR016140">
    <property type="entry name" value="Bifunc_inhib/LTP/seed_store"/>
</dbReference>
<dbReference type="InterPro" id="IPR000528">
    <property type="entry name" value="Plant_nsLTP"/>
</dbReference>
<dbReference type="PANTHER" id="PTHR33076">
    <property type="entry name" value="NON-SPECIFIC LIPID-TRANSFER PROTEIN 2-RELATED"/>
    <property type="match status" value="1"/>
</dbReference>
<dbReference type="Pfam" id="PF00234">
    <property type="entry name" value="Tryp_alpha_amyl"/>
    <property type="match status" value="1"/>
</dbReference>
<dbReference type="PRINTS" id="PR00382">
    <property type="entry name" value="LIPIDTRNSFER"/>
</dbReference>
<dbReference type="SMART" id="SM00499">
    <property type="entry name" value="AAI"/>
    <property type="match status" value="1"/>
</dbReference>
<dbReference type="SUPFAM" id="SSF47699">
    <property type="entry name" value="Bifunctional inhibitor/lipid-transfer protein/seed storage 2S albumin"/>
    <property type="match status" value="1"/>
</dbReference>
<accession>A0A7G2A2Z3</accession>
<protein>
    <recommendedName>
        <fullName evidence="5">Non-specific lipid-transfer protein</fullName>
        <shortName evidence="7">LTP</shortName>
        <shortName evidence="5">NsLTP</shortName>
    </recommendedName>
</protein>
<organism evidence="8">
    <name type="scientific">Macadamia integrifolia</name>
    <name type="common">Macadamia nut</name>
    <dbReference type="NCBI Taxonomy" id="60698"/>
    <lineage>
        <taxon>Eukaryota</taxon>
        <taxon>Viridiplantae</taxon>
        <taxon>Streptophyta</taxon>
        <taxon>Embryophyta</taxon>
        <taxon>Tracheophyta</taxon>
        <taxon>Spermatophyta</taxon>
        <taxon>Magnoliopsida</taxon>
        <taxon>Proteales</taxon>
        <taxon>Proteaceae</taxon>
        <taxon>Macadamia</taxon>
    </lineage>
</organism>
<proteinExistence type="evidence at protein level"/>
<sequence>MANSGVMKLVCLVLACMVVAAPLAEAAITCGQVVSKLAPCLTYLRSGGAVPGTCCNAVKNLNNSAKTTPDRQTACGCLKNAYNSISGINAAYAGGLPAKCGVNLPYKISPSINCATYTLSLYNF</sequence>
<comment type="function">
    <text evidence="3">Plant non-specific lipid-transfer proteins transfer phospholipids as well as galactolipids across membranes. May play a role in wax or cutin deposition in the cell walls of expanding epidermal cells and certain secretory tissues.</text>
</comment>
<comment type="allergen">
    <text evidence="4">Causes an allergic reaction in human (PubMed:34525424). Recombinant protein binds to IgE in 40% of 5 patients allergic to macadamia nut (PubMed:34525424). Binds to IgE in 38% of 8 macadamia nut sensitized but clinically tolerant patients, however only weak IgE binding is observed in 1 of these patients (PubMed:34525424). Also binds to IgE in 14% of the 14 patients tested, that are allergic to peanut and/or tree nut but tolerant and not-sensitized to macadamia nut (PubMed:34525424).</text>
</comment>
<comment type="similarity">
    <text evidence="6">Belongs to the plant LTP family.</text>
</comment>
<name>NLTP_MACIN</name>
<evidence type="ECO:0000250" key="1">
    <source>
        <dbReference type="UniProtKB" id="Q9ATH2"/>
    </source>
</evidence>
<evidence type="ECO:0000255" key="2"/>
<evidence type="ECO:0000255" key="3">
    <source>
        <dbReference type="RuleBase" id="RU000628"/>
    </source>
</evidence>
<evidence type="ECO:0000269" key="4">
    <source>
    </source>
</evidence>
<evidence type="ECO:0000303" key="5">
    <source>
    </source>
</evidence>
<evidence type="ECO:0000305" key="6"/>
<evidence type="ECO:0000305" key="7">
    <source>
    </source>
</evidence>
<evidence type="ECO:0000312" key="8">
    <source>
        <dbReference type="EMBL" id="CAD1459612.1"/>
    </source>
</evidence>